<keyword id="KW-0067">ATP-binding</keyword>
<keyword id="KW-0963">Cytoplasm</keyword>
<keyword id="KW-0418">Kinase</keyword>
<keyword id="KW-0547">Nucleotide-binding</keyword>
<keyword id="KW-0808">Transferase</keyword>
<proteinExistence type="inferred from homology"/>
<gene>
    <name evidence="1" type="primary">buk</name>
    <name type="ordered locus">BCA_4273</name>
</gene>
<feature type="chain" id="PRO_1000146587" description="Probable butyrate kinase">
    <location>
        <begin position="1"/>
        <end position="367"/>
    </location>
</feature>
<organism>
    <name type="scientific">Bacillus cereus (strain 03BB102)</name>
    <dbReference type="NCBI Taxonomy" id="572264"/>
    <lineage>
        <taxon>Bacteria</taxon>
        <taxon>Bacillati</taxon>
        <taxon>Bacillota</taxon>
        <taxon>Bacilli</taxon>
        <taxon>Bacillales</taxon>
        <taxon>Bacillaceae</taxon>
        <taxon>Bacillus</taxon>
        <taxon>Bacillus cereus group</taxon>
    </lineage>
</organism>
<name>BUK_BACC3</name>
<sequence length="367" mass="39969">MSVNRILVINPGSTSTKIGVFDNERPVLEETIRHDEEQIGKYKRIIDQYEFRKETILEVLHSHGINISKLNAVCGRGGLLRPIEGGTYTVNDAMLEDLKNGFSGHHASNLGGILAYEIASGLNIPAFIVDPVVVDEMEPIARISGIAGMERKSIFHALNQKAVARKVAEELNHKYEDLNLLVTHMGGGITVGAHKKGKVIDVNNGLNGEGPFSPERAGTVPVGQLVEMCFSGEYYRDEMVKKLVGQGGLVSLIGTNDAIKVEQMVEKGDPEATLIYKAMAYQVAKEIGGASAVLHGKIDAIVLTGGLAYSKILVDEIKERVDWIADVIVHPGEDELQALAEGALRVLREEEAPKEYIVREKETVARG</sequence>
<dbReference type="EC" id="2.7.2.7" evidence="1"/>
<dbReference type="EMBL" id="CP001407">
    <property type="protein sequence ID" value="ACO29996.1"/>
    <property type="molecule type" value="Genomic_DNA"/>
</dbReference>
<dbReference type="RefSeq" id="WP_000115773.1">
    <property type="nucleotide sequence ID" value="NZ_CP009318.1"/>
</dbReference>
<dbReference type="SMR" id="C1ERN7"/>
<dbReference type="GeneID" id="45024047"/>
<dbReference type="KEGG" id="bcx:BCA_4273"/>
<dbReference type="PATRIC" id="fig|572264.18.peg.4224"/>
<dbReference type="Proteomes" id="UP000002210">
    <property type="component" value="Chromosome"/>
</dbReference>
<dbReference type="GO" id="GO:0005737">
    <property type="term" value="C:cytoplasm"/>
    <property type="evidence" value="ECO:0007669"/>
    <property type="project" value="UniProtKB-SubCell"/>
</dbReference>
<dbReference type="GO" id="GO:0008776">
    <property type="term" value="F:acetate kinase activity"/>
    <property type="evidence" value="ECO:0007669"/>
    <property type="project" value="TreeGrafter"/>
</dbReference>
<dbReference type="GO" id="GO:0005524">
    <property type="term" value="F:ATP binding"/>
    <property type="evidence" value="ECO:0007669"/>
    <property type="project" value="UniProtKB-KW"/>
</dbReference>
<dbReference type="GO" id="GO:0047761">
    <property type="term" value="F:butyrate kinase activity"/>
    <property type="evidence" value="ECO:0007669"/>
    <property type="project" value="UniProtKB-UniRule"/>
</dbReference>
<dbReference type="GO" id="GO:0006083">
    <property type="term" value="P:acetate metabolic process"/>
    <property type="evidence" value="ECO:0007669"/>
    <property type="project" value="TreeGrafter"/>
</dbReference>
<dbReference type="CDD" id="cd24011">
    <property type="entry name" value="ASKHA_NBD_BK"/>
    <property type="match status" value="1"/>
</dbReference>
<dbReference type="Gene3D" id="3.30.420.40">
    <property type="match status" value="2"/>
</dbReference>
<dbReference type="HAMAP" id="MF_00542">
    <property type="entry name" value="Butyrate_kinase"/>
    <property type="match status" value="1"/>
</dbReference>
<dbReference type="InterPro" id="IPR000890">
    <property type="entry name" value="Aliphatic_acid_kin_short-chain"/>
</dbReference>
<dbReference type="InterPro" id="IPR023865">
    <property type="entry name" value="Aliphatic_acid_kinase_CS"/>
</dbReference>
<dbReference type="InterPro" id="IPR043129">
    <property type="entry name" value="ATPase_NBD"/>
</dbReference>
<dbReference type="InterPro" id="IPR011245">
    <property type="entry name" value="Butyrate_kin"/>
</dbReference>
<dbReference type="NCBIfam" id="TIGR02707">
    <property type="entry name" value="butyr_kinase"/>
    <property type="match status" value="1"/>
</dbReference>
<dbReference type="NCBIfam" id="NF002834">
    <property type="entry name" value="PRK03011.1-5"/>
    <property type="match status" value="1"/>
</dbReference>
<dbReference type="PANTHER" id="PTHR21060">
    <property type="entry name" value="ACETATE KINASE"/>
    <property type="match status" value="1"/>
</dbReference>
<dbReference type="PANTHER" id="PTHR21060:SF3">
    <property type="entry name" value="BUTYRATE KINASE 2-RELATED"/>
    <property type="match status" value="1"/>
</dbReference>
<dbReference type="Pfam" id="PF00871">
    <property type="entry name" value="Acetate_kinase"/>
    <property type="match status" value="1"/>
</dbReference>
<dbReference type="PIRSF" id="PIRSF036458">
    <property type="entry name" value="Butyrate_kin"/>
    <property type="match status" value="1"/>
</dbReference>
<dbReference type="PRINTS" id="PR00471">
    <property type="entry name" value="ACETATEKNASE"/>
</dbReference>
<dbReference type="SUPFAM" id="SSF53067">
    <property type="entry name" value="Actin-like ATPase domain"/>
    <property type="match status" value="2"/>
</dbReference>
<dbReference type="PROSITE" id="PS01075">
    <property type="entry name" value="ACETATE_KINASE_1"/>
    <property type="match status" value="1"/>
</dbReference>
<dbReference type="PROSITE" id="PS01076">
    <property type="entry name" value="ACETATE_KINASE_2"/>
    <property type="match status" value="1"/>
</dbReference>
<protein>
    <recommendedName>
        <fullName evidence="1">Probable butyrate kinase</fullName>
        <shortName evidence="1">BK</shortName>
        <ecNumber evidence="1">2.7.2.7</ecNumber>
    </recommendedName>
    <alternativeName>
        <fullName evidence="1">Branched-chain carboxylic acid kinase</fullName>
    </alternativeName>
</protein>
<evidence type="ECO:0000255" key="1">
    <source>
        <dbReference type="HAMAP-Rule" id="MF_00542"/>
    </source>
</evidence>
<accession>C1ERN7</accession>
<comment type="catalytic activity">
    <reaction evidence="1">
        <text>butanoate + ATP = butanoyl phosphate + ADP</text>
        <dbReference type="Rhea" id="RHEA:13585"/>
        <dbReference type="ChEBI" id="CHEBI:17968"/>
        <dbReference type="ChEBI" id="CHEBI:30616"/>
        <dbReference type="ChEBI" id="CHEBI:58079"/>
        <dbReference type="ChEBI" id="CHEBI:456216"/>
        <dbReference type="EC" id="2.7.2.7"/>
    </reaction>
</comment>
<comment type="subcellular location">
    <subcellularLocation>
        <location evidence="1">Cytoplasm</location>
    </subcellularLocation>
</comment>
<comment type="similarity">
    <text evidence="1">Belongs to the acetokinase family.</text>
</comment>
<reference key="1">
    <citation type="submission" date="2009-02" db="EMBL/GenBank/DDBJ databases">
        <title>Genome sequence of Bacillus cereus 03BB102.</title>
        <authorList>
            <person name="Dodson R.J."/>
            <person name="Jackson P."/>
            <person name="Munk A.C."/>
            <person name="Brettin T."/>
            <person name="Bruce D."/>
            <person name="Detter C."/>
            <person name="Tapia R."/>
            <person name="Han C."/>
            <person name="Sutton G."/>
            <person name="Sims D."/>
        </authorList>
    </citation>
    <scope>NUCLEOTIDE SEQUENCE [LARGE SCALE GENOMIC DNA]</scope>
    <source>
        <strain>03BB102</strain>
    </source>
</reference>